<accession>B2SDR3</accession>
<protein>
    <recommendedName>
        <fullName evidence="1">Probable Fe(2+)-trafficking protein</fullName>
    </recommendedName>
</protein>
<sequence>MTKVFCKKYHQELDAIPFQPLPGELGKKIHNEISNKAWQAWLAHQTILINEYRLNLIETKAKEFLKEEMHKFLFEGKEEKPEQFSEI</sequence>
<name>FETP_FRATM</name>
<keyword id="KW-0408">Iron</keyword>
<comment type="function">
    <text evidence="1">Could be a mediator in iron transactions between iron acquisition and iron-requiring processes, such as synthesis and/or repair of Fe-S clusters in biosynthetic enzymes.</text>
</comment>
<comment type="similarity">
    <text evidence="1">Belongs to the Fe(2+)-trafficking protein family.</text>
</comment>
<reference key="1">
    <citation type="journal article" date="2009" name="PLoS Pathog.">
        <title>Molecular evolutionary consequences of niche restriction in Francisella tularensis, a facultative intracellular pathogen.</title>
        <authorList>
            <person name="Larsson P."/>
            <person name="Elfsmark D."/>
            <person name="Svensson K."/>
            <person name="Wikstroem P."/>
            <person name="Forsman M."/>
            <person name="Brettin T."/>
            <person name="Keim P."/>
            <person name="Johansson A."/>
        </authorList>
    </citation>
    <scope>NUCLEOTIDE SEQUENCE [LARGE SCALE GENOMIC DNA]</scope>
    <source>
        <strain>FSC147</strain>
    </source>
</reference>
<organism>
    <name type="scientific">Francisella tularensis subsp. mediasiatica (strain FSC147)</name>
    <dbReference type="NCBI Taxonomy" id="441952"/>
    <lineage>
        <taxon>Bacteria</taxon>
        <taxon>Pseudomonadati</taxon>
        <taxon>Pseudomonadota</taxon>
        <taxon>Gammaproteobacteria</taxon>
        <taxon>Thiotrichales</taxon>
        <taxon>Francisellaceae</taxon>
        <taxon>Francisella</taxon>
    </lineage>
</organism>
<proteinExistence type="inferred from homology"/>
<evidence type="ECO:0000255" key="1">
    <source>
        <dbReference type="HAMAP-Rule" id="MF_00686"/>
    </source>
</evidence>
<gene>
    <name type="ordered locus">FTM_1447</name>
</gene>
<dbReference type="EMBL" id="CP000915">
    <property type="protein sequence ID" value="ACD31277.1"/>
    <property type="molecule type" value="Genomic_DNA"/>
</dbReference>
<dbReference type="SMR" id="B2SDR3"/>
<dbReference type="KEGG" id="ftm:FTM_1447"/>
<dbReference type="HOGENOM" id="CLU_170994_0_0_6"/>
<dbReference type="GO" id="GO:0005829">
    <property type="term" value="C:cytosol"/>
    <property type="evidence" value="ECO:0007669"/>
    <property type="project" value="TreeGrafter"/>
</dbReference>
<dbReference type="GO" id="GO:0005506">
    <property type="term" value="F:iron ion binding"/>
    <property type="evidence" value="ECO:0007669"/>
    <property type="project" value="UniProtKB-UniRule"/>
</dbReference>
<dbReference type="GO" id="GO:0034599">
    <property type="term" value="P:cellular response to oxidative stress"/>
    <property type="evidence" value="ECO:0007669"/>
    <property type="project" value="TreeGrafter"/>
</dbReference>
<dbReference type="Gene3D" id="1.10.3880.10">
    <property type="entry name" value="Fe(II) trafficking protein YggX"/>
    <property type="match status" value="1"/>
</dbReference>
<dbReference type="HAMAP" id="MF_00686">
    <property type="entry name" value="Fe_traffic_YggX"/>
    <property type="match status" value="1"/>
</dbReference>
<dbReference type="InterPro" id="IPR007457">
    <property type="entry name" value="Fe_traffick_prot_YggX"/>
</dbReference>
<dbReference type="InterPro" id="IPR036766">
    <property type="entry name" value="Fe_traffick_prot_YggX_sf"/>
</dbReference>
<dbReference type="NCBIfam" id="NF003817">
    <property type="entry name" value="PRK05408.1"/>
    <property type="match status" value="1"/>
</dbReference>
<dbReference type="PANTHER" id="PTHR36965">
    <property type="entry name" value="FE(2+)-TRAFFICKING PROTEIN-RELATED"/>
    <property type="match status" value="1"/>
</dbReference>
<dbReference type="PANTHER" id="PTHR36965:SF1">
    <property type="entry name" value="FE(2+)-TRAFFICKING PROTEIN-RELATED"/>
    <property type="match status" value="1"/>
</dbReference>
<dbReference type="Pfam" id="PF04362">
    <property type="entry name" value="Iron_traffic"/>
    <property type="match status" value="1"/>
</dbReference>
<dbReference type="PIRSF" id="PIRSF029827">
    <property type="entry name" value="Fe_traffic_YggX"/>
    <property type="match status" value="1"/>
</dbReference>
<dbReference type="SUPFAM" id="SSF111148">
    <property type="entry name" value="YggX-like"/>
    <property type="match status" value="1"/>
</dbReference>
<feature type="chain" id="PRO_1000131849" description="Probable Fe(2+)-trafficking protein">
    <location>
        <begin position="1"/>
        <end position="87"/>
    </location>
</feature>